<keyword id="KW-0687">Ribonucleoprotein</keyword>
<keyword id="KW-0689">Ribosomal protein</keyword>
<protein>
    <recommendedName>
        <fullName evidence="1">Large ribosomal subunit protein bL19</fullName>
    </recommendedName>
    <alternativeName>
        <fullName evidence="2">50S ribosomal protein L19</fullName>
    </alternativeName>
</protein>
<reference key="1">
    <citation type="submission" date="2007-08" db="EMBL/GenBank/DDBJ databases">
        <authorList>
            <consortium name="The Vibrio harveyi Genome Sequencing Project"/>
            <person name="Bassler B."/>
            <person name="Clifton S.W."/>
            <person name="Fulton L."/>
            <person name="Delehaunty K."/>
            <person name="Fronick C."/>
            <person name="Harrison M."/>
            <person name="Markivic C."/>
            <person name="Fulton R."/>
            <person name="Tin-Wollam A.-M."/>
            <person name="Shah N."/>
            <person name="Pepin K."/>
            <person name="Nash W."/>
            <person name="Thiruvilangam P."/>
            <person name="Bhonagiri V."/>
            <person name="Waters C."/>
            <person name="Tu K.C."/>
            <person name="Irgon J."/>
            <person name="Wilson R.K."/>
        </authorList>
    </citation>
    <scope>NUCLEOTIDE SEQUENCE [LARGE SCALE GENOMIC DNA]</scope>
    <source>
        <strain>ATCC BAA-1116 / BB120</strain>
    </source>
</reference>
<sequence length="117" mass="13277">MSNIIKALEEEQMKSDLPKFAPGDTVVVQVKVKEGDRERLQAFEGVVIAIRNRGLHSAFTVRKISNGEGVERTFQTHSPIVDSIEVKRRGAVRRAKLYYLRERSGKSARIKEKLAKK</sequence>
<name>RL19_VIBC1</name>
<accession>A7MYU9</accession>
<evidence type="ECO:0000255" key="1">
    <source>
        <dbReference type="HAMAP-Rule" id="MF_00402"/>
    </source>
</evidence>
<evidence type="ECO:0000305" key="2"/>
<gene>
    <name evidence="1" type="primary">rplS</name>
    <name type="ordered locus">VIBHAR_03477</name>
</gene>
<proteinExistence type="inferred from homology"/>
<comment type="function">
    <text evidence="1">This protein is located at the 30S-50S ribosomal subunit interface and may play a role in the structure and function of the aminoacyl-tRNA binding site.</text>
</comment>
<comment type="similarity">
    <text evidence="1">Belongs to the bacterial ribosomal protein bL19 family.</text>
</comment>
<organism>
    <name type="scientific">Vibrio campbellii (strain ATCC BAA-1116)</name>
    <dbReference type="NCBI Taxonomy" id="2902295"/>
    <lineage>
        <taxon>Bacteria</taxon>
        <taxon>Pseudomonadati</taxon>
        <taxon>Pseudomonadota</taxon>
        <taxon>Gammaproteobacteria</taxon>
        <taxon>Vibrionales</taxon>
        <taxon>Vibrionaceae</taxon>
        <taxon>Vibrio</taxon>
    </lineage>
</organism>
<dbReference type="EMBL" id="CP000789">
    <property type="protein sequence ID" value="ABU72422.1"/>
    <property type="molecule type" value="Genomic_DNA"/>
</dbReference>
<dbReference type="RefSeq" id="WP_005379971.1">
    <property type="nucleotide sequence ID" value="NC_022269.1"/>
</dbReference>
<dbReference type="SMR" id="A7MYU9"/>
<dbReference type="GeneID" id="83580668"/>
<dbReference type="KEGG" id="vha:VIBHAR_03477"/>
<dbReference type="PATRIC" id="fig|338187.25.peg.2723"/>
<dbReference type="Proteomes" id="UP000008152">
    <property type="component" value="Chromosome I"/>
</dbReference>
<dbReference type="GO" id="GO:0022625">
    <property type="term" value="C:cytosolic large ribosomal subunit"/>
    <property type="evidence" value="ECO:0007669"/>
    <property type="project" value="TreeGrafter"/>
</dbReference>
<dbReference type="GO" id="GO:0003735">
    <property type="term" value="F:structural constituent of ribosome"/>
    <property type="evidence" value="ECO:0007669"/>
    <property type="project" value="InterPro"/>
</dbReference>
<dbReference type="GO" id="GO:0006412">
    <property type="term" value="P:translation"/>
    <property type="evidence" value="ECO:0007669"/>
    <property type="project" value="UniProtKB-UniRule"/>
</dbReference>
<dbReference type="FunFam" id="2.30.30.790:FF:000001">
    <property type="entry name" value="50S ribosomal protein L19"/>
    <property type="match status" value="1"/>
</dbReference>
<dbReference type="Gene3D" id="2.30.30.790">
    <property type="match status" value="1"/>
</dbReference>
<dbReference type="HAMAP" id="MF_00402">
    <property type="entry name" value="Ribosomal_bL19"/>
    <property type="match status" value="1"/>
</dbReference>
<dbReference type="InterPro" id="IPR001857">
    <property type="entry name" value="Ribosomal_bL19"/>
</dbReference>
<dbReference type="InterPro" id="IPR018257">
    <property type="entry name" value="Ribosomal_bL19_CS"/>
</dbReference>
<dbReference type="InterPro" id="IPR038657">
    <property type="entry name" value="Ribosomal_bL19_sf"/>
</dbReference>
<dbReference type="InterPro" id="IPR008991">
    <property type="entry name" value="Translation_prot_SH3-like_sf"/>
</dbReference>
<dbReference type="NCBIfam" id="TIGR01024">
    <property type="entry name" value="rplS_bact"/>
    <property type="match status" value="1"/>
</dbReference>
<dbReference type="PANTHER" id="PTHR15680:SF9">
    <property type="entry name" value="LARGE RIBOSOMAL SUBUNIT PROTEIN BL19M"/>
    <property type="match status" value="1"/>
</dbReference>
<dbReference type="PANTHER" id="PTHR15680">
    <property type="entry name" value="RIBOSOMAL PROTEIN L19"/>
    <property type="match status" value="1"/>
</dbReference>
<dbReference type="Pfam" id="PF01245">
    <property type="entry name" value="Ribosomal_L19"/>
    <property type="match status" value="1"/>
</dbReference>
<dbReference type="PIRSF" id="PIRSF002191">
    <property type="entry name" value="Ribosomal_L19"/>
    <property type="match status" value="1"/>
</dbReference>
<dbReference type="PRINTS" id="PR00061">
    <property type="entry name" value="RIBOSOMALL19"/>
</dbReference>
<dbReference type="SUPFAM" id="SSF50104">
    <property type="entry name" value="Translation proteins SH3-like domain"/>
    <property type="match status" value="1"/>
</dbReference>
<dbReference type="PROSITE" id="PS01015">
    <property type="entry name" value="RIBOSOMAL_L19"/>
    <property type="match status" value="1"/>
</dbReference>
<feature type="chain" id="PRO_1000049762" description="Large ribosomal subunit protein bL19">
    <location>
        <begin position="1"/>
        <end position="117"/>
    </location>
</feature>